<feature type="chain" id="PRO_0000068628" description="Uncharacterized HTH-type transcriptional regulator in aarA 3'region">
    <location>
        <begin position="1"/>
        <end position="282"/>
    </location>
</feature>
<feature type="domain" description="HTH rpiR-type" evidence="1">
    <location>
        <begin position="4"/>
        <end position="80"/>
    </location>
</feature>
<feature type="domain" description="SIS" evidence="2">
    <location>
        <begin position="125"/>
        <end position="265"/>
    </location>
</feature>
<feature type="DNA-binding region" description="H-T-H motif" evidence="1">
    <location>
        <begin position="40"/>
        <end position="59"/>
    </location>
</feature>
<proteinExistence type="predicted"/>
<reference key="1">
    <citation type="journal article" date="1994" name="J. Bacteriol.">
        <title>Characterization of aarA, a pleiotrophic negative regulator of the 2'-N-acetyltransferase in Providencia stuartii.</title>
        <authorList>
            <person name="Rather P.N."/>
            <person name="Orosz E."/>
        </authorList>
    </citation>
    <scope>NUCLEOTIDE SEQUENCE [GENOMIC DNA]</scope>
    <source>
        <strain>PR50</strain>
    </source>
</reference>
<reference key="2">
    <citation type="unpublished observations" date="1995-07">
        <authorList>
            <person name="Robison K."/>
        </authorList>
    </citation>
    <scope>IDENTIFICATION</scope>
</reference>
<protein>
    <recommendedName>
        <fullName>Uncharacterized HTH-type transcriptional regulator in aarA 3'region</fullName>
    </recommendedName>
</protein>
<organism>
    <name type="scientific">Providencia stuartii</name>
    <dbReference type="NCBI Taxonomy" id="588"/>
    <lineage>
        <taxon>Bacteria</taxon>
        <taxon>Pseudomonadati</taxon>
        <taxon>Pseudomonadota</taxon>
        <taxon>Gammaproteobacteria</taxon>
        <taxon>Enterobacterales</taxon>
        <taxon>Morganellaceae</taxon>
        <taxon>Providencia</taxon>
    </lineage>
</organism>
<sequence>MGMSTLTSKLESLLNRGKGTEQRLARFLLDSRDNFVAMNVAELAQAAGVSSASVIRFTRQMGYRGYSDFKVDYLSDEKQYKAESLSGSLNPYDDTEQIIAKSGQMFITAIEKSLELLDPNTMDEIAQKIVEAKRIVLFGVGTSAIVAYDIFYKLIRVNKYALFSPDLHVQLSYSSNVDADDLVIAITAKGNTPDINHMLKLANKKGCSTIVLTRFGQDEAVRLADLVLPYFYDEQLFQTGVITPQVLQMVVFDTLFFKYLTLTNEDVVLALQKEREAIIQLG</sequence>
<dbReference type="EMBL" id="L28755">
    <property type="status" value="NOT_ANNOTATED_CDS"/>
    <property type="molecule type" value="Genomic_DNA"/>
</dbReference>
<dbReference type="SMR" id="P46117"/>
<dbReference type="STRING" id="588.BGK56_18960"/>
<dbReference type="GO" id="GO:0097367">
    <property type="term" value="F:carbohydrate derivative binding"/>
    <property type="evidence" value="ECO:0007669"/>
    <property type="project" value="InterPro"/>
</dbReference>
<dbReference type="GO" id="GO:0003677">
    <property type="term" value="F:DNA binding"/>
    <property type="evidence" value="ECO:0007669"/>
    <property type="project" value="UniProtKB-KW"/>
</dbReference>
<dbReference type="GO" id="GO:0003700">
    <property type="term" value="F:DNA-binding transcription factor activity"/>
    <property type="evidence" value="ECO:0007669"/>
    <property type="project" value="InterPro"/>
</dbReference>
<dbReference type="GO" id="GO:1901135">
    <property type="term" value="P:carbohydrate derivative metabolic process"/>
    <property type="evidence" value="ECO:0007669"/>
    <property type="project" value="InterPro"/>
</dbReference>
<dbReference type="CDD" id="cd05013">
    <property type="entry name" value="SIS_RpiR"/>
    <property type="match status" value="1"/>
</dbReference>
<dbReference type="Gene3D" id="3.40.50.10490">
    <property type="entry name" value="Glucose-6-phosphate isomerase like protein, domain 1"/>
    <property type="match status" value="1"/>
</dbReference>
<dbReference type="Gene3D" id="1.10.10.10">
    <property type="entry name" value="Winged helix-like DNA-binding domain superfamily/Winged helix DNA-binding domain"/>
    <property type="match status" value="1"/>
</dbReference>
<dbReference type="InterPro" id="IPR009057">
    <property type="entry name" value="Homeodomain-like_sf"/>
</dbReference>
<dbReference type="InterPro" id="IPR000281">
    <property type="entry name" value="HTH_RpiR"/>
</dbReference>
<dbReference type="InterPro" id="IPR047640">
    <property type="entry name" value="RpiR-like"/>
</dbReference>
<dbReference type="InterPro" id="IPR035472">
    <property type="entry name" value="RpiR-like_SIS"/>
</dbReference>
<dbReference type="InterPro" id="IPR001347">
    <property type="entry name" value="SIS_dom"/>
</dbReference>
<dbReference type="InterPro" id="IPR046348">
    <property type="entry name" value="SIS_dom_sf"/>
</dbReference>
<dbReference type="InterPro" id="IPR036388">
    <property type="entry name" value="WH-like_DNA-bd_sf"/>
</dbReference>
<dbReference type="PANTHER" id="PTHR30514">
    <property type="entry name" value="GLUCOKINASE"/>
    <property type="match status" value="1"/>
</dbReference>
<dbReference type="PANTHER" id="PTHR30514:SF1">
    <property type="entry name" value="HTH-TYPE TRANSCRIPTIONAL REGULATOR HEXR-RELATED"/>
    <property type="match status" value="1"/>
</dbReference>
<dbReference type="Pfam" id="PF01418">
    <property type="entry name" value="HTH_6"/>
    <property type="match status" value="1"/>
</dbReference>
<dbReference type="Pfam" id="PF01380">
    <property type="entry name" value="SIS"/>
    <property type="match status" value="1"/>
</dbReference>
<dbReference type="SUPFAM" id="SSF46689">
    <property type="entry name" value="Homeodomain-like"/>
    <property type="match status" value="1"/>
</dbReference>
<dbReference type="SUPFAM" id="SSF53697">
    <property type="entry name" value="SIS domain"/>
    <property type="match status" value="1"/>
</dbReference>
<dbReference type="PROSITE" id="PS51071">
    <property type="entry name" value="HTH_RPIR"/>
    <property type="match status" value="1"/>
</dbReference>
<dbReference type="PROSITE" id="PS51464">
    <property type="entry name" value="SIS"/>
    <property type="match status" value="1"/>
</dbReference>
<evidence type="ECO:0000255" key="1">
    <source>
        <dbReference type="PROSITE-ProRule" id="PRU00390"/>
    </source>
</evidence>
<evidence type="ECO:0000255" key="2">
    <source>
        <dbReference type="PROSITE-ProRule" id="PRU00797"/>
    </source>
</evidence>
<name>YARA_PROST</name>
<accession>P46117</accession>
<keyword id="KW-0238">DNA-binding</keyword>
<keyword id="KW-0804">Transcription</keyword>
<keyword id="KW-0805">Transcription regulation</keyword>